<reference key="1">
    <citation type="submission" date="2007-11" db="EMBL/GenBank/DDBJ databases">
        <authorList>
            <consortium name="The Salmonella enterica serovar Arizonae Genome Sequencing Project"/>
            <person name="McClelland M."/>
            <person name="Sanderson E.K."/>
            <person name="Porwollik S."/>
            <person name="Spieth J."/>
            <person name="Clifton W.S."/>
            <person name="Fulton R."/>
            <person name="Chunyan W."/>
            <person name="Wollam A."/>
            <person name="Shah N."/>
            <person name="Pepin K."/>
            <person name="Bhonagiri V."/>
            <person name="Nash W."/>
            <person name="Johnson M."/>
            <person name="Thiruvilangam P."/>
            <person name="Wilson R."/>
        </authorList>
    </citation>
    <scope>NUCLEOTIDE SEQUENCE [LARGE SCALE GENOMIC DNA]</scope>
    <source>
        <strain>ATCC BAA-731 / CDC346-86 / RSK2980</strain>
    </source>
</reference>
<sequence>MKYHDLRDFLTLLEQQGELKRITLPVDPHLEITEIADRTLRAGGPALLFENPKGYSMPVLCNLFGTPKRVAMGMGQDDVSALRDVGKLLAFLKEPEPPKGFRDLFDKLPQFKQVLNMPTKRLRGAPCQQKIASGDDVDLTRLPIMTCWPDDAAPLITWGLTVTRGPHKERQNLGIYRQQLIDKNKLIMRWLSHRGGALDFQEWLAAHPGERFPISVALGADPATILGAVTPVPDTLSEYAFAGLLRGTKTEVVKCLSNDLEVPASAEIILEGYIEPGEMAPEGPYGDHTGYYNEVDNFPVFTVTHITQREDAIYHSTYTGRPPDEPAVLGVALNEVFVPILQKQFPEIVDFYLPPEGCSYRLAVVTMKKQYAGHAKRVMMGVWSFLRQFMYTKFVIVCDDDVNARDWNDVIWAITTRMDPARDTVLVDNTPIDYLDFASPVSGLGSKMGLDATNKWPGETQREWGRPIVKDPEVTARIDAIWDELAIFK</sequence>
<organism>
    <name type="scientific">Salmonella arizonae (strain ATCC BAA-731 / CDC346-86 / RSK2980)</name>
    <dbReference type="NCBI Taxonomy" id="41514"/>
    <lineage>
        <taxon>Bacteria</taxon>
        <taxon>Pseudomonadati</taxon>
        <taxon>Pseudomonadota</taxon>
        <taxon>Gammaproteobacteria</taxon>
        <taxon>Enterobacterales</taxon>
        <taxon>Enterobacteriaceae</taxon>
        <taxon>Salmonella</taxon>
    </lineage>
</organism>
<name>UBID_SALAR</name>
<protein>
    <recommendedName>
        <fullName evidence="1">3-octaprenyl-4-hydroxybenzoate carboxy-lyase</fullName>
        <ecNumber evidence="1">4.1.1.98</ecNumber>
    </recommendedName>
    <alternativeName>
        <fullName evidence="1">Polyprenyl p-hydroxybenzoate decarboxylase</fullName>
    </alternativeName>
</protein>
<proteinExistence type="inferred from homology"/>
<keyword id="KW-1003">Cell membrane</keyword>
<keyword id="KW-0210">Decarboxylase</keyword>
<keyword id="KW-0285">Flavoprotein</keyword>
<keyword id="KW-0288">FMN</keyword>
<keyword id="KW-0456">Lyase</keyword>
<keyword id="KW-0464">Manganese</keyword>
<keyword id="KW-0472">Membrane</keyword>
<keyword id="KW-0479">Metal-binding</keyword>
<keyword id="KW-1185">Reference proteome</keyword>
<keyword id="KW-0831">Ubiquinone biosynthesis</keyword>
<feature type="chain" id="PRO_0000335868" description="3-octaprenyl-4-hydroxybenzoate carboxy-lyase">
    <location>
        <begin position="1"/>
        <end position="489"/>
    </location>
</feature>
<feature type="active site" description="Proton donor" evidence="1">
    <location>
        <position position="287"/>
    </location>
</feature>
<feature type="binding site" evidence="1">
    <location>
        <position position="172"/>
    </location>
    <ligand>
        <name>Mn(2+)</name>
        <dbReference type="ChEBI" id="CHEBI:29035"/>
    </ligand>
</feature>
<feature type="binding site" evidence="1">
    <location>
        <begin position="175"/>
        <end position="177"/>
    </location>
    <ligand>
        <name>prenylated FMN</name>
        <dbReference type="ChEBI" id="CHEBI:87746"/>
    </ligand>
</feature>
<feature type="binding site" evidence="1">
    <location>
        <begin position="189"/>
        <end position="191"/>
    </location>
    <ligand>
        <name>prenylated FMN</name>
        <dbReference type="ChEBI" id="CHEBI:87746"/>
    </ligand>
</feature>
<feature type="binding site" evidence="1">
    <location>
        <begin position="194"/>
        <end position="195"/>
    </location>
    <ligand>
        <name>prenylated FMN</name>
        <dbReference type="ChEBI" id="CHEBI:87746"/>
    </ligand>
</feature>
<feature type="binding site" evidence="1">
    <location>
        <position position="238"/>
    </location>
    <ligand>
        <name>Mn(2+)</name>
        <dbReference type="ChEBI" id="CHEBI:29035"/>
    </ligand>
</feature>
<gene>
    <name evidence="1" type="primary">ubiD</name>
    <name type="ordered locus">SARI_03679</name>
</gene>
<dbReference type="EC" id="4.1.1.98" evidence="1"/>
<dbReference type="EMBL" id="CP000880">
    <property type="protein sequence ID" value="ABX23484.1"/>
    <property type="status" value="ALT_INIT"/>
    <property type="molecule type" value="Genomic_DNA"/>
</dbReference>
<dbReference type="SMR" id="A9MIX5"/>
<dbReference type="STRING" id="41514.SARI_03679"/>
<dbReference type="KEGG" id="ses:SARI_03679"/>
<dbReference type="HOGENOM" id="CLU_023348_4_1_6"/>
<dbReference type="UniPathway" id="UPA00232"/>
<dbReference type="Proteomes" id="UP000002084">
    <property type="component" value="Chromosome"/>
</dbReference>
<dbReference type="GO" id="GO:0005829">
    <property type="term" value="C:cytosol"/>
    <property type="evidence" value="ECO:0007669"/>
    <property type="project" value="TreeGrafter"/>
</dbReference>
<dbReference type="GO" id="GO:0005886">
    <property type="term" value="C:plasma membrane"/>
    <property type="evidence" value="ECO:0007669"/>
    <property type="project" value="UniProtKB-SubCell"/>
</dbReference>
<dbReference type="GO" id="GO:0008694">
    <property type="term" value="F:3-octaprenyl-4-hydroxybenzoate carboxy-lyase activity"/>
    <property type="evidence" value="ECO:0007669"/>
    <property type="project" value="UniProtKB-UniRule"/>
</dbReference>
<dbReference type="GO" id="GO:0046872">
    <property type="term" value="F:metal ion binding"/>
    <property type="evidence" value="ECO:0007669"/>
    <property type="project" value="UniProtKB-KW"/>
</dbReference>
<dbReference type="GO" id="GO:0006744">
    <property type="term" value="P:ubiquinone biosynthetic process"/>
    <property type="evidence" value="ECO:0007669"/>
    <property type="project" value="UniProtKB-UniRule"/>
</dbReference>
<dbReference type="FunFam" id="1.20.5.570:FF:000001">
    <property type="entry name" value="3-octaprenyl-4-hydroxybenzoate carboxy-lyase"/>
    <property type="match status" value="1"/>
</dbReference>
<dbReference type="FunFam" id="3.40.1670.10:FF:000001">
    <property type="entry name" value="3-octaprenyl-4-hydroxybenzoate carboxy-lyase"/>
    <property type="match status" value="1"/>
</dbReference>
<dbReference type="Gene3D" id="1.20.5.570">
    <property type="entry name" value="Single helix bin"/>
    <property type="match status" value="1"/>
</dbReference>
<dbReference type="Gene3D" id="3.40.1670.10">
    <property type="entry name" value="UbiD C-terminal domain-like"/>
    <property type="match status" value="1"/>
</dbReference>
<dbReference type="HAMAP" id="MF_01636">
    <property type="entry name" value="UbiD"/>
    <property type="match status" value="1"/>
</dbReference>
<dbReference type="InterPro" id="IPR002830">
    <property type="entry name" value="UbiD"/>
</dbReference>
<dbReference type="InterPro" id="IPR049381">
    <property type="entry name" value="UbiD-like_C"/>
</dbReference>
<dbReference type="InterPro" id="IPR049383">
    <property type="entry name" value="UbiD-like_N"/>
</dbReference>
<dbReference type="InterPro" id="IPR023677">
    <property type="entry name" value="UbiD_bacteria"/>
</dbReference>
<dbReference type="InterPro" id="IPR048304">
    <property type="entry name" value="UbiD_Rift_dom"/>
</dbReference>
<dbReference type="NCBIfam" id="NF008175">
    <property type="entry name" value="PRK10922.1"/>
    <property type="match status" value="1"/>
</dbReference>
<dbReference type="NCBIfam" id="TIGR00148">
    <property type="entry name" value="UbiD family decarboxylase"/>
    <property type="match status" value="1"/>
</dbReference>
<dbReference type="PANTHER" id="PTHR30108">
    <property type="entry name" value="3-OCTAPRENYL-4-HYDROXYBENZOATE CARBOXY-LYASE-RELATED"/>
    <property type="match status" value="1"/>
</dbReference>
<dbReference type="PANTHER" id="PTHR30108:SF17">
    <property type="entry name" value="FERULIC ACID DECARBOXYLASE 1"/>
    <property type="match status" value="1"/>
</dbReference>
<dbReference type="Pfam" id="PF01977">
    <property type="entry name" value="UbiD"/>
    <property type="match status" value="1"/>
</dbReference>
<dbReference type="Pfam" id="PF20696">
    <property type="entry name" value="UbiD_C"/>
    <property type="match status" value="1"/>
</dbReference>
<dbReference type="Pfam" id="PF20695">
    <property type="entry name" value="UbiD_N"/>
    <property type="match status" value="1"/>
</dbReference>
<dbReference type="SUPFAM" id="SSF50475">
    <property type="entry name" value="FMN-binding split barrel"/>
    <property type="match status" value="1"/>
</dbReference>
<dbReference type="SUPFAM" id="SSF143968">
    <property type="entry name" value="UbiD C-terminal domain-like"/>
    <property type="match status" value="1"/>
</dbReference>
<evidence type="ECO:0000255" key="1">
    <source>
        <dbReference type="HAMAP-Rule" id="MF_01636"/>
    </source>
</evidence>
<evidence type="ECO:0000305" key="2"/>
<comment type="function">
    <text evidence="1">Catalyzes the decarboxylation of 3-octaprenyl-4-hydroxy benzoate to 2-octaprenylphenol, an intermediate step in ubiquinone biosynthesis.</text>
</comment>
<comment type="catalytic activity">
    <reaction evidence="1">
        <text>a 4-hydroxy-3-(all-trans-polyprenyl)benzoate + H(+) = a 2-(all-trans-polyprenyl)phenol + CO2</text>
        <dbReference type="Rhea" id="RHEA:41680"/>
        <dbReference type="Rhea" id="RHEA-COMP:9514"/>
        <dbReference type="Rhea" id="RHEA-COMP:9516"/>
        <dbReference type="ChEBI" id="CHEBI:1269"/>
        <dbReference type="ChEBI" id="CHEBI:15378"/>
        <dbReference type="ChEBI" id="CHEBI:16526"/>
        <dbReference type="ChEBI" id="CHEBI:78396"/>
        <dbReference type="EC" id="4.1.1.98"/>
    </reaction>
</comment>
<comment type="cofactor">
    <cofactor evidence="1">
        <name>prenylated FMN</name>
        <dbReference type="ChEBI" id="CHEBI:87746"/>
    </cofactor>
    <text evidence="1">Binds 1 prenylated FMN per subunit.</text>
</comment>
<comment type="cofactor">
    <cofactor evidence="1">
        <name>Mn(2+)</name>
        <dbReference type="ChEBI" id="CHEBI:29035"/>
    </cofactor>
</comment>
<comment type="pathway">
    <text evidence="1">Cofactor biosynthesis; ubiquinone biosynthesis.</text>
</comment>
<comment type="subunit">
    <text evidence="1">Homohexamer.</text>
</comment>
<comment type="subcellular location">
    <subcellularLocation>
        <location evidence="1">Cell membrane</location>
        <topology evidence="1">Peripheral membrane protein</topology>
    </subcellularLocation>
</comment>
<comment type="similarity">
    <text evidence="1">Belongs to the UbiD family.</text>
</comment>
<comment type="sequence caution" evidence="2">
    <conflict type="erroneous initiation">
        <sequence resource="EMBL-CDS" id="ABX23484"/>
    </conflict>
</comment>
<accession>A9MIX5</accession>